<proteinExistence type="predicted"/>
<gene>
    <name type="ordered locus">AtMg00120</name>
</gene>
<sequence>MAGQCLMQEIALYELFFFSLLKTGSFGLSARMEIFFSKTAWNLIRQTYPKVDYAGIVRNKFNIPNPSHSIIAWMALNSGLQQIELADFIPTNTVTLCGLCMLEDESAEHLFSAAMQGGFFLSSVRNVDMISLQPTFMMFANGL</sequence>
<dbReference type="EMBL" id="Y08501">
    <property type="protein sequence ID" value="CAA69757.1"/>
    <property type="molecule type" value="Genomic_DNA"/>
</dbReference>
<dbReference type="EMBL" id="BK010421">
    <property type="status" value="NOT_ANNOTATED_CDS"/>
    <property type="molecule type" value="Genomic_DNA"/>
</dbReference>
<dbReference type="RefSeq" id="NP_085483.1">
    <property type="nucleotide sequence ID" value="NC_001284.2"/>
</dbReference>
<dbReference type="STRING" id="3702.P93281"/>
<dbReference type="PaxDb" id="3702-ATMG00120.1"/>
<dbReference type="EnsemblPlants" id="ATMG00120.1">
    <property type="protein sequence ID" value="ATMG00120.1"/>
    <property type="gene ID" value="ATMG00120"/>
</dbReference>
<dbReference type="Gramene" id="ATMG00120.1">
    <property type="protein sequence ID" value="ATMG00120.1"/>
    <property type="gene ID" value="ATMG00120"/>
</dbReference>
<dbReference type="Araport" id="ATMG00120"/>
<dbReference type="TAIR" id="ATMG00120">
    <property type="gene designation" value="ORF143"/>
</dbReference>
<dbReference type="HOGENOM" id="CLU_1808862_0_0_1"/>
<dbReference type="InParanoid" id="P93281"/>
<dbReference type="PRO" id="PR:P93281"/>
<dbReference type="Proteomes" id="UP000006548">
    <property type="component" value="Mitochondrion MT"/>
</dbReference>
<dbReference type="ExpressionAtlas" id="P93281">
    <property type="expression patterns" value="baseline and differential"/>
</dbReference>
<dbReference type="GO" id="GO:0005739">
    <property type="term" value="C:mitochondrion"/>
    <property type="evidence" value="ECO:0007669"/>
    <property type="project" value="UniProtKB-SubCell"/>
</dbReference>
<dbReference type="InterPro" id="IPR026960">
    <property type="entry name" value="RVT-Znf"/>
</dbReference>
<dbReference type="Pfam" id="PF13966">
    <property type="entry name" value="zf-RVT"/>
    <property type="match status" value="1"/>
</dbReference>
<comment type="subcellular location">
    <subcellularLocation>
        <location evidence="1">Mitochondrion</location>
    </subcellularLocation>
</comment>
<evidence type="ECO:0000305" key="1"/>
<reference key="1">
    <citation type="journal article" date="1997" name="Nat. Genet.">
        <title>The mitochondrial genome of Arabidopsis thaliana contains 57 genes in 366,924 nucleotides.</title>
        <authorList>
            <person name="Unseld M."/>
            <person name="Marienfeld J.R."/>
            <person name="Brandt P."/>
            <person name="Brennicke A."/>
        </authorList>
    </citation>
    <scope>NUCLEOTIDE SEQUENCE [LARGE SCALE GENOMIC DNA]</scope>
    <source>
        <strain>cv. C24</strain>
    </source>
</reference>
<reference key="2">
    <citation type="journal article" date="2018" name="Plant Cell">
        <title>Correction of persistent errors in Arabidopsis reference mitochondrial genomes.</title>
        <authorList>
            <person name="Sloan D.B."/>
            <person name="Wu Z."/>
            <person name="Sharbrough J."/>
        </authorList>
    </citation>
    <scope>NUCLEOTIDE SEQUENCE [LARGE SCALE GENOMIC DNA]</scope>
    <source>
        <strain>cv. Columbia</strain>
    </source>
</reference>
<accession>P93281</accession>
<protein>
    <recommendedName>
        <fullName>Uncharacterized mitochondrial protein AtMg00120</fullName>
    </recommendedName>
    <alternativeName>
        <fullName>ORF143</fullName>
    </alternativeName>
</protein>
<keyword id="KW-0496">Mitochondrion</keyword>
<keyword id="KW-1185">Reference proteome</keyword>
<name>M120_ARATH</name>
<feature type="chain" id="PRO_0000196755" description="Uncharacterized mitochondrial protein AtMg00120">
    <location>
        <begin position="1"/>
        <end position="143"/>
    </location>
</feature>
<geneLocation type="mitochondrion"/>
<organism>
    <name type="scientific">Arabidopsis thaliana</name>
    <name type="common">Mouse-ear cress</name>
    <dbReference type="NCBI Taxonomy" id="3702"/>
    <lineage>
        <taxon>Eukaryota</taxon>
        <taxon>Viridiplantae</taxon>
        <taxon>Streptophyta</taxon>
        <taxon>Embryophyta</taxon>
        <taxon>Tracheophyta</taxon>
        <taxon>Spermatophyta</taxon>
        <taxon>Magnoliopsida</taxon>
        <taxon>eudicotyledons</taxon>
        <taxon>Gunneridae</taxon>
        <taxon>Pentapetalae</taxon>
        <taxon>rosids</taxon>
        <taxon>malvids</taxon>
        <taxon>Brassicales</taxon>
        <taxon>Brassicaceae</taxon>
        <taxon>Camelineae</taxon>
        <taxon>Arabidopsis</taxon>
    </lineage>
</organism>